<protein>
    <recommendedName>
        <fullName evidence="1">Probable potassium transport system protein Kup 2</fullName>
    </recommendedName>
</protein>
<proteinExistence type="inferred from homology"/>
<reference key="1">
    <citation type="submission" date="2006-02" db="EMBL/GenBank/DDBJ databases">
        <title>Complete sequence of chromosome of Rhodoferax ferrireducens DSM 15236.</title>
        <authorList>
            <person name="Copeland A."/>
            <person name="Lucas S."/>
            <person name="Lapidus A."/>
            <person name="Barry K."/>
            <person name="Detter J.C."/>
            <person name="Glavina del Rio T."/>
            <person name="Hammon N."/>
            <person name="Israni S."/>
            <person name="Pitluck S."/>
            <person name="Brettin T."/>
            <person name="Bruce D."/>
            <person name="Han C."/>
            <person name="Tapia R."/>
            <person name="Gilna P."/>
            <person name="Kiss H."/>
            <person name="Schmutz J."/>
            <person name="Larimer F."/>
            <person name="Land M."/>
            <person name="Kyrpides N."/>
            <person name="Ivanova N."/>
            <person name="Richardson P."/>
        </authorList>
    </citation>
    <scope>NUCLEOTIDE SEQUENCE [LARGE SCALE GENOMIC DNA]</scope>
    <source>
        <strain>ATCC BAA-621 / DSM 15236 / T118</strain>
    </source>
</reference>
<evidence type="ECO:0000255" key="1">
    <source>
        <dbReference type="HAMAP-Rule" id="MF_01522"/>
    </source>
</evidence>
<organism>
    <name type="scientific">Albidiferax ferrireducens (strain ATCC BAA-621 / DSM 15236 / T118)</name>
    <name type="common">Rhodoferax ferrireducens</name>
    <dbReference type="NCBI Taxonomy" id="338969"/>
    <lineage>
        <taxon>Bacteria</taxon>
        <taxon>Pseudomonadati</taxon>
        <taxon>Pseudomonadota</taxon>
        <taxon>Betaproteobacteria</taxon>
        <taxon>Burkholderiales</taxon>
        <taxon>Comamonadaceae</taxon>
        <taxon>Rhodoferax</taxon>
    </lineage>
</organism>
<accession>Q21VE7</accession>
<dbReference type="EMBL" id="CP000267">
    <property type="protein sequence ID" value="ABD70256.1"/>
    <property type="molecule type" value="Genomic_DNA"/>
</dbReference>
<dbReference type="RefSeq" id="WP_011464824.1">
    <property type="nucleotide sequence ID" value="NC_007908.1"/>
</dbReference>
<dbReference type="STRING" id="338969.Rfer_2539"/>
<dbReference type="KEGG" id="rfr:Rfer_2539"/>
<dbReference type="eggNOG" id="COG3158">
    <property type="taxonomic scope" value="Bacteria"/>
</dbReference>
<dbReference type="HOGENOM" id="CLU_008142_4_2_4"/>
<dbReference type="OrthoDB" id="9805577at2"/>
<dbReference type="Proteomes" id="UP000008332">
    <property type="component" value="Chromosome"/>
</dbReference>
<dbReference type="GO" id="GO:0005886">
    <property type="term" value="C:plasma membrane"/>
    <property type="evidence" value="ECO:0007669"/>
    <property type="project" value="UniProtKB-SubCell"/>
</dbReference>
<dbReference type="GO" id="GO:0015079">
    <property type="term" value="F:potassium ion transmembrane transporter activity"/>
    <property type="evidence" value="ECO:0007669"/>
    <property type="project" value="UniProtKB-UniRule"/>
</dbReference>
<dbReference type="GO" id="GO:0015293">
    <property type="term" value="F:symporter activity"/>
    <property type="evidence" value="ECO:0007669"/>
    <property type="project" value="UniProtKB-UniRule"/>
</dbReference>
<dbReference type="HAMAP" id="MF_01522">
    <property type="entry name" value="Kup"/>
    <property type="match status" value="1"/>
</dbReference>
<dbReference type="InterPro" id="IPR003855">
    <property type="entry name" value="K+_transporter"/>
</dbReference>
<dbReference type="InterPro" id="IPR053952">
    <property type="entry name" value="K_trans_C"/>
</dbReference>
<dbReference type="InterPro" id="IPR053951">
    <property type="entry name" value="K_trans_N"/>
</dbReference>
<dbReference type="InterPro" id="IPR023051">
    <property type="entry name" value="Kup"/>
</dbReference>
<dbReference type="PANTHER" id="PTHR30540:SF79">
    <property type="entry name" value="LOW AFFINITY POTASSIUM TRANSPORT SYSTEM PROTEIN KUP"/>
    <property type="match status" value="1"/>
</dbReference>
<dbReference type="PANTHER" id="PTHR30540">
    <property type="entry name" value="OSMOTIC STRESS POTASSIUM TRANSPORTER"/>
    <property type="match status" value="1"/>
</dbReference>
<dbReference type="Pfam" id="PF02705">
    <property type="entry name" value="K_trans"/>
    <property type="match status" value="1"/>
</dbReference>
<dbReference type="Pfam" id="PF22776">
    <property type="entry name" value="K_trans_C"/>
    <property type="match status" value="1"/>
</dbReference>
<feature type="chain" id="PRO_5000110522" description="Probable potassium transport system protein Kup 2">
    <location>
        <begin position="1"/>
        <end position="625"/>
    </location>
</feature>
<feature type="transmembrane region" description="Helical" evidence="1">
    <location>
        <begin position="10"/>
        <end position="30"/>
    </location>
</feature>
<feature type="transmembrane region" description="Helical" evidence="1">
    <location>
        <begin position="47"/>
        <end position="67"/>
    </location>
</feature>
<feature type="transmembrane region" description="Helical" evidence="1">
    <location>
        <begin position="104"/>
        <end position="124"/>
    </location>
</feature>
<feature type="transmembrane region" description="Helical" evidence="1">
    <location>
        <begin position="140"/>
        <end position="160"/>
    </location>
</feature>
<feature type="transmembrane region" description="Helical" evidence="1">
    <location>
        <begin position="172"/>
        <end position="192"/>
    </location>
</feature>
<feature type="transmembrane region" description="Helical" evidence="1">
    <location>
        <begin position="214"/>
        <end position="234"/>
    </location>
</feature>
<feature type="transmembrane region" description="Helical" evidence="1">
    <location>
        <begin position="250"/>
        <end position="270"/>
    </location>
</feature>
<feature type="transmembrane region" description="Helical" evidence="1">
    <location>
        <begin position="283"/>
        <end position="303"/>
    </location>
</feature>
<feature type="transmembrane region" description="Helical" evidence="1">
    <location>
        <begin position="347"/>
        <end position="367"/>
    </location>
</feature>
<feature type="transmembrane region" description="Helical" evidence="1">
    <location>
        <begin position="369"/>
        <end position="389"/>
    </location>
</feature>
<feature type="transmembrane region" description="Helical" evidence="1">
    <location>
        <begin position="396"/>
        <end position="416"/>
    </location>
</feature>
<feature type="transmembrane region" description="Helical" evidence="1">
    <location>
        <begin position="422"/>
        <end position="442"/>
    </location>
</feature>
<comment type="function">
    <text evidence="1">Transport of potassium into the cell. Likely operates as a K(+):H(+) symporter.</text>
</comment>
<comment type="catalytic activity">
    <reaction evidence="1">
        <text>K(+)(in) + H(+)(in) = K(+)(out) + H(+)(out)</text>
        <dbReference type="Rhea" id="RHEA:28490"/>
        <dbReference type="ChEBI" id="CHEBI:15378"/>
        <dbReference type="ChEBI" id="CHEBI:29103"/>
    </reaction>
    <physiologicalReaction direction="right-to-left" evidence="1">
        <dbReference type="Rhea" id="RHEA:28492"/>
    </physiologicalReaction>
</comment>
<comment type="subcellular location">
    <subcellularLocation>
        <location evidence="1">Cell inner membrane</location>
        <topology evidence="1">Multi-pass membrane protein</topology>
    </subcellularLocation>
</comment>
<comment type="similarity">
    <text evidence="1">Belongs to the HAK/KUP transporter (TC 2.A.72) family.</text>
</comment>
<sequence>MSRTSNRESLAALTLGAMGVVYGDIGTSPLYTMKEVFSPATGVPLDGVHLIGAVSVIFWGLMMVVTLKYVLLILRADNRGEGGIMALTALAANAAGKTARRRTVLLLMGVFGAALFYGDSVITPAISVLSAVEGLEVVTPAFKSYVLPISVTVLIGLFAVQRFGTSLVGKLFGPVIMLWFAVLSVTGVAEIIQQPAILAALNPLNAFEFLRSQGWHMFVAVGAIVLAFTGVEALYADMGHFGKRPIQLAWLGLVLPALAINYMGQGALLMRDPSALANPFYRLFPQAWLMPAVVLATLATVIASQAVISGAYSMTKQAVLLGLLPRMQVQYTSAKEIGQIYMPEVNWLLLISVLLAVVGFGSSSALASAYGIAVTMTMLITTALTFFVVRDGWGYPLPVALAATAVFLALDTLLVVSCSLKFFQGGWFPLVLGLVIFTVMATWRRGRELLIDNIRHDDPELLPFITALSADVVHRVPRTAVYTVANPDTVPQALMHNLKHNQVLHERNVILTVVFHDVPWIAFDERVQVKPLVPGFWKVQVNYGFKNAPDIPRALELCQSQGLSINLFETSYFLSREIVVPTKGAGMAHWREALFAIMSRNAGSVADFFRLPNNCVIELGTRVQI</sequence>
<gene>
    <name evidence="1" type="primary">kup2</name>
    <name type="ordered locus">Rfer_2539</name>
</gene>
<name>KUP2_ALBFT</name>
<keyword id="KW-0997">Cell inner membrane</keyword>
<keyword id="KW-1003">Cell membrane</keyword>
<keyword id="KW-0406">Ion transport</keyword>
<keyword id="KW-0472">Membrane</keyword>
<keyword id="KW-0630">Potassium</keyword>
<keyword id="KW-0633">Potassium transport</keyword>
<keyword id="KW-1185">Reference proteome</keyword>
<keyword id="KW-0769">Symport</keyword>
<keyword id="KW-0812">Transmembrane</keyword>
<keyword id="KW-1133">Transmembrane helix</keyword>
<keyword id="KW-0813">Transport</keyword>